<gene>
    <name evidence="1" type="primary">argC</name>
    <name type="ordered locus">AHA_0593</name>
</gene>
<name>ARGC_AERHH</name>
<protein>
    <recommendedName>
        <fullName evidence="1">N-acetyl-gamma-glutamyl-phosphate reductase</fullName>
        <shortName evidence="1">AGPR</shortName>
        <ecNumber evidence="1">1.2.1.38</ecNumber>
    </recommendedName>
    <alternativeName>
        <fullName evidence="1">N-acetyl-glutamate semialdehyde dehydrogenase</fullName>
        <shortName evidence="1">NAGSA dehydrogenase</shortName>
    </alternativeName>
</protein>
<feature type="chain" id="PRO_1000010971" description="N-acetyl-gamma-glutamyl-phosphate reductase">
    <location>
        <begin position="1"/>
        <end position="335"/>
    </location>
</feature>
<feature type="active site" evidence="1">
    <location>
        <position position="156"/>
    </location>
</feature>
<proteinExistence type="inferred from homology"/>
<organism>
    <name type="scientific">Aeromonas hydrophila subsp. hydrophila (strain ATCC 7966 / DSM 30187 / BCRC 13018 / CCUG 14551 / JCM 1027 / KCTC 2358 / NCIMB 9240 / NCTC 8049)</name>
    <dbReference type="NCBI Taxonomy" id="380703"/>
    <lineage>
        <taxon>Bacteria</taxon>
        <taxon>Pseudomonadati</taxon>
        <taxon>Pseudomonadota</taxon>
        <taxon>Gammaproteobacteria</taxon>
        <taxon>Aeromonadales</taxon>
        <taxon>Aeromonadaceae</taxon>
        <taxon>Aeromonas</taxon>
    </lineage>
</organism>
<comment type="function">
    <text evidence="1">Catalyzes the NADPH-dependent reduction of N-acetyl-5-glutamyl phosphate to yield N-acetyl-L-glutamate 5-semialdehyde.</text>
</comment>
<comment type="catalytic activity">
    <reaction evidence="1">
        <text>N-acetyl-L-glutamate 5-semialdehyde + phosphate + NADP(+) = N-acetyl-L-glutamyl 5-phosphate + NADPH + H(+)</text>
        <dbReference type="Rhea" id="RHEA:21588"/>
        <dbReference type="ChEBI" id="CHEBI:15378"/>
        <dbReference type="ChEBI" id="CHEBI:29123"/>
        <dbReference type="ChEBI" id="CHEBI:43474"/>
        <dbReference type="ChEBI" id="CHEBI:57783"/>
        <dbReference type="ChEBI" id="CHEBI:57936"/>
        <dbReference type="ChEBI" id="CHEBI:58349"/>
        <dbReference type="EC" id="1.2.1.38"/>
    </reaction>
</comment>
<comment type="pathway">
    <text evidence="1">Amino-acid biosynthesis; L-arginine biosynthesis; N(2)-acetyl-L-ornithine from L-glutamate: step 3/4.</text>
</comment>
<comment type="subcellular location">
    <subcellularLocation>
        <location evidence="1">Cytoplasm</location>
    </subcellularLocation>
</comment>
<comment type="similarity">
    <text evidence="1">Belongs to the NAGSA dehydrogenase family. Type 1 subfamily.</text>
</comment>
<evidence type="ECO:0000255" key="1">
    <source>
        <dbReference type="HAMAP-Rule" id="MF_00150"/>
    </source>
</evidence>
<accession>A0KFV0</accession>
<keyword id="KW-0028">Amino-acid biosynthesis</keyword>
<keyword id="KW-0055">Arginine biosynthesis</keyword>
<keyword id="KW-0963">Cytoplasm</keyword>
<keyword id="KW-0521">NADP</keyword>
<keyword id="KW-0560">Oxidoreductase</keyword>
<keyword id="KW-1185">Reference proteome</keyword>
<dbReference type="EC" id="1.2.1.38" evidence="1"/>
<dbReference type="EMBL" id="CP000462">
    <property type="protein sequence ID" value="ABK37991.1"/>
    <property type="molecule type" value="Genomic_DNA"/>
</dbReference>
<dbReference type="RefSeq" id="WP_011704560.1">
    <property type="nucleotide sequence ID" value="NC_008570.1"/>
</dbReference>
<dbReference type="RefSeq" id="YP_855126.1">
    <property type="nucleotide sequence ID" value="NC_008570.1"/>
</dbReference>
<dbReference type="SMR" id="A0KFV0"/>
<dbReference type="STRING" id="380703.AHA_0593"/>
<dbReference type="EnsemblBacteria" id="ABK37991">
    <property type="protein sequence ID" value="ABK37991"/>
    <property type="gene ID" value="AHA_0593"/>
</dbReference>
<dbReference type="GeneID" id="4489260"/>
<dbReference type="KEGG" id="aha:AHA_0593"/>
<dbReference type="PATRIC" id="fig|380703.7.peg.590"/>
<dbReference type="eggNOG" id="COG0002">
    <property type="taxonomic scope" value="Bacteria"/>
</dbReference>
<dbReference type="HOGENOM" id="CLU_006384_0_1_6"/>
<dbReference type="OrthoDB" id="9801289at2"/>
<dbReference type="UniPathway" id="UPA00068">
    <property type="reaction ID" value="UER00108"/>
</dbReference>
<dbReference type="Proteomes" id="UP000000756">
    <property type="component" value="Chromosome"/>
</dbReference>
<dbReference type="GO" id="GO:0005737">
    <property type="term" value="C:cytoplasm"/>
    <property type="evidence" value="ECO:0007669"/>
    <property type="project" value="UniProtKB-SubCell"/>
</dbReference>
<dbReference type="GO" id="GO:0003942">
    <property type="term" value="F:N-acetyl-gamma-glutamyl-phosphate reductase activity"/>
    <property type="evidence" value="ECO:0007669"/>
    <property type="project" value="UniProtKB-UniRule"/>
</dbReference>
<dbReference type="GO" id="GO:0051287">
    <property type="term" value="F:NAD binding"/>
    <property type="evidence" value="ECO:0007669"/>
    <property type="project" value="InterPro"/>
</dbReference>
<dbReference type="GO" id="GO:0070401">
    <property type="term" value="F:NADP+ binding"/>
    <property type="evidence" value="ECO:0007669"/>
    <property type="project" value="InterPro"/>
</dbReference>
<dbReference type="GO" id="GO:0006526">
    <property type="term" value="P:L-arginine biosynthetic process"/>
    <property type="evidence" value="ECO:0007669"/>
    <property type="project" value="UniProtKB-UniRule"/>
</dbReference>
<dbReference type="CDD" id="cd23934">
    <property type="entry name" value="AGPR_1_C"/>
    <property type="match status" value="1"/>
</dbReference>
<dbReference type="CDD" id="cd17895">
    <property type="entry name" value="AGPR_1_N"/>
    <property type="match status" value="1"/>
</dbReference>
<dbReference type="FunFam" id="3.30.360.10:FF:000014">
    <property type="entry name" value="N-acetyl-gamma-glutamyl-phosphate reductase"/>
    <property type="match status" value="1"/>
</dbReference>
<dbReference type="Gene3D" id="3.30.360.10">
    <property type="entry name" value="Dihydrodipicolinate Reductase, domain 2"/>
    <property type="match status" value="1"/>
</dbReference>
<dbReference type="Gene3D" id="3.40.50.720">
    <property type="entry name" value="NAD(P)-binding Rossmann-like Domain"/>
    <property type="match status" value="1"/>
</dbReference>
<dbReference type="HAMAP" id="MF_00150">
    <property type="entry name" value="ArgC_type1"/>
    <property type="match status" value="1"/>
</dbReference>
<dbReference type="InterPro" id="IPR023013">
    <property type="entry name" value="AGPR_AS"/>
</dbReference>
<dbReference type="InterPro" id="IPR000706">
    <property type="entry name" value="AGPR_type-1"/>
</dbReference>
<dbReference type="InterPro" id="IPR036291">
    <property type="entry name" value="NAD(P)-bd_dom_sf"/>
</dbReference>
<dbReference type="InterPro" id="IPR050085">
    <property type="entry name" value="NAGSA_dehydrogenase"/>
</dbReference>
<dbReference type="InterPro" id="IPR000534">
    <property type="entry name" value="Semialdehyde_DH_NAD-bd"/>
</dbReference>
<dbReference type="NCBIfam" id="TIGR01850">
    <property type="entry name" value="argC"/>
    <property type="match status" value="1"/>
</dbReference>
<dbReference type="PANTHER" id="PTHR32338:SF10">
    <property type="entry name" value="N-ACETYL-GAMMA-GLUTAMYL-PHOSPHATE REDUCTASE, CHLOROPLASTIC-RELATED"/>
    <property type="match status" value="1"/>
</dbReference>
<dbReference type="PANTHER" id="PTHR32338">
    <property type="entry name" value="N-ACETYL-GAMMA-GLUTAMYL-PHOSPHATE REDUCTASE, CHLOROPLASTIC-RELATED-RELATED"/>
    <property type="match status" value="1"/>
</dbReference>
<dbReference type="Pfam" id="PF01118">
    <property type="entry name" value="Semialdhyde_dh"/>
    <property type="match status" value="1"/>
</dbReference>
<dbReference type="Pfam" id="PF22698">
    <property type="entry name" value="Semialdhyde_dhC_1"/>
    <property type="match status" value="1"/>
</dbReference>
<dbReference type="SMART" id="SM00859">
    <property type="entry name" value="Semialdhyde_dh"/>
    <property type="match status" value="1"/>
</dbReference>
<dbReference type="SUPFAM" id="SSF55347">
    <property type="entry name" value="Glyceraldehyde-3-phosphate dehydrogenase-like, C-terminal domain"/>
    <property type="match status" value="1"/>
</dbReference>
<dbReference type="SUPFAM" id="SSF51735">
    <property type="entry name" value="NAD(P)-binding Rossmann-fold domains"/>
    <property type="match status" value="1"/>
</dbReference>
<dbReference type="PROSITE" id="PS01224">
    <property type="entry name" value="ARGC"/>
    <property type="match status" value="1"/>
</dbReference>
<sequence length="335" mass="36045">MLNTVIVGASGYAGAELAALVQNHPQLKLFGLYVSAGSQDAHKRFSSLHPQWVGALDQPLLPLDEDGMTRILTQADLVLLATAHEVSATLAPKFLAKGLPVFDLSGAFRVRDQQFYASYYGFTHDSEQWLDQAAYGLAEWNAEAVKAAQLIAVPGCYPTASLCALKPLQQAGLIAKGWQPIINAVSGVSGAGRKAAINTSFCEVSLNPYGTFNHRHQPEISHHLGKEVLFQPHLGNYVRGILATIYVQLADGVTPTQVDQAYLKAYEGKPLVRLTGQMPSIRGVAGTPYCDLAWQQQGNMLVVVCAIDNLLKGAASQAMQCINIKFGFEPATGLI</sequence>
<reference key="1">
    <citation type="journal article" date="2006" name="J. Bacteriol.">
        <title>Genome sequence of Aeromonas hydrophila ATCC 7966T: jack of all trades.</title>
        <authorList>
            <person name="Seshadri R."/>
            <person name="Joseph S.W."/>
            <person name="Chopra A.K."/>
            <person name="Sha J."/>
            <person name="Shaw J."/>
            <person name="Graf J."/>
            <person name="Haft D.H."/>
            <person name="Wu M."/>
            <person name="Ren Q."/>
            <person name="Rosovitz M.J."/>
            <person name="Madupu R."/>
            <person name="Tallon L."/>
            <person name="Kim M."/>
            <person name="Jin S."/>
            <person name="Vuong H."/>
            <person name="Stine O.C."/>
            <person name="Ali A."/>
            <person name="Horneman A.J."/>
            <person name="Heidelberg J.F."/>
        </authorList>
    </citation>
    <scope>NUCLEOTIDE SEQUENCE [LARGE SCALE GENOMIC DNA]</scope>
    <source>
        <strain>ATCC 7966 / DSM 30187 / BCRC 13018 / CCUG 14551 / JCM 1027 / KCTC 2358 / NCIMB 9240 / NCTC 8049</strain>
    </source>
</reference>